<comment type="function">
    <text evidence="1">Mitochondrial membrane ATP synthase (F(1)F(0) ATP synthase or Complex V) produces ATP from ADP in the presence of a proton gradient across the membrane which is generated by electron transport complexes of the respiratory chain. F-type ATPases consist of two structural domains, F(1) - containing the extramembraneous catalytic core, and F(0) - containing the membrane proton channel, linked together by a central stalk and a peripheral stalk. During catalysis, ATP synthesis in the catalytic domain of F(1) is coupled via a rotary mechanism of the central stalk subunits to proton translocation. Part of the complex F(0) domain and the peripheric stalk, which acts as a stator to hold the catalytic alpha(3)beta(3) subcomplex and subunit a/ATP6 static relative to the rotary elements (By similarity).</text>
</comment>
<comment type="subunit">
    <text evidence="1">F-type ATPases have 2 components, CF(1) - the catalytic core - and CF(0) - the membrane proton channel. CF(0) seems to have nine subunits: a, b, c, d, e, f, g, F6 and 8 (or A6L) (By similarity).</text>
</comment>
<comment type="subcellular location">
    <subcellularLocation>
        <location>Mitochondrion</location>
    </subcellularLocation>
    <subcellularLocation>
        <location>Mitochondrion inner membrane</location>
    </subcellularLocation>
</comment>
<comment type="alternative products">
    <event type="alternative splicing"/>
    <isoform>
        <id>Q9FT52-1</id>
        <name>1</name>
        <sequence type="displayed"/>
    </isoform>
    <text>A number of isoforms are produced. According to EST sequences.</text>
</comment>
<comment type="similarity">
    <text evidence="3">Belongs to the ATPase d subunit family.</text>
</comment>
<accession>Q9FT52</accession>
<accession>Q8RW89</accession>
<accession>Q8W039</accession>
<proteinExistence type="evidence at protein level"/>
<reference evidence="3" key="1">
    <citation type="thesis" date="2000" institute="Cambridge University" country="United Kingdom">
        <authorList>
            <person name="Mahon P."/>
        </authorList>
    </citation>
    <scope>NUCLEOTIDE SEQUENCE [MRNA]</scope>
    <source>
        <strain>cv. Columbia</strain>
    </source>
</reference>
<reference evidence="3" key="2">
    <citation type="journal article" date="2000" name="Nature">
        <title>Sequence and analysis of chromosome 3 of the plant Arabidopsis thaliana.</title>
        <authorList>
            <person name="Salanoubat M."/>
            <person name="Lemcke K."/>
            <person name="Rieger M."/>
            <person name="Ansorge W."/>
            <person name="Unseld M."/>
            <person name="Fartmann B."/>
            <person name="Valle G."/>
            <person name="Bloecker H."/>
            <person name="Perez-Alonso M."/>
            <person name="Obermaier B."/>
            <person name="Delseny M."/>
            <person name="Boutry M."/>
            <person name="Grivell L.A."/>
            <person name="Mache R."/>
            <person name="Puigdomenech P."/>
            <person name="De Simone V."/>
            <person name="Choisne N."/>
            <person name="Artiguenave F."/>
            <person name="Robert C."/>
            <person name="Brottier P."/>
            <person name="Wincker P."/>
            <person name="Cattolico L."/>
            <person name="Weissenbach J."/>
            <person name="Saurin W."/>
            <person name="Quetier F."/>
            <person name="Schaefer M."/>
            <person name="Mueller-Auer S."/>
            <person name="Gabel C."/>
            <person name="Fuchs M."/>
            <person name="Benes V."/>
            <person name="Wurmbach E."/>
            <person name="Drzonek H."/>
            <person name="Erfle H."/>
            <person name="Jordan N."/>
            <person name="Bangert S."/>
            <person name="Wiedelmann R."/>
            <person name="Kranz H."/>
            <person name="Voss H."/>
            <person name="Holland R."/>
            <person name="Brandt P."/>
            <person name="Nyakatura G."/>
            <person name="Vezzi A."/>
            <person name="D'Angelo M."/>
            <person name="Pallavicini A."/>
            <person name="Toppo S."/>
            <person name="Simionati B."/>
            <person name="Conrad A."/>
            <person name="Hornischer K."/>
            <person name="Kauer G."/>
            <person name="Loehnert T.-H."/>
            <person name="Nordsiek G."/>
            <person name="Reichelt J."/>
            <person name="Scharfe M."/>
            <person name="Schoen O."/>
            <person name="Bargues M."/>
            <person name="Terol J."/>
            <person name="Climent J."/>
            <person name="Navarro P."/>
            <person name="Collado C."/>
            <person name="Perez-Perez A."/>
            <person name="Ottenwaelder B."/>
            <person name="Duchemin D."/>
            <person name="Cooke R."/>
            <person name="Laudie M."/>
            <person name="Berger-Llauro C."/>
            <person name="Purnelle B."/>
            <person name="Masuy D."/>
            <person name="de Haan M."/>
            <person name="Maarse A.C."/>
            <person name="Alcaraz J.-P."/>
            <person name="Cottet A."/>
            <person name="Casacuberta E."/>
            <person name="Monfort A."/>
            <person name="Argiriou A."/>
            <person name="Flores M."/>
            <person name="Liguori R."/>
            <person name="Vitale D."/>
            <person name="Mannhaupt G."/>
            <person name="Haase D."/>
            <person name="Schoof H."/>
            <person name="Rudd S."/>
            <person name="Zaccaria P."/>
            <person name="Mewes H.-W."/>
            <person name="Mayer K.F.X."/>
            <person name="Kaul S."/>
            <person name="Town C.D."/>
            <person name="Koo H.L."/>
            <person name="Tallon L.J."/>
            <person name="Jenkins J."/>
            <person name="Rooney T."/>
            <person name="Rizzo M."/>
            <person name="Walts A."/>
            <person name="Utterback T."/>
            <person name="Fujii C.Y."/>
            <person name="Shea T.P."/>
            <person name="Creasy T.H."/>
            <person name="Haas B."/>
            <person name="Maiti R."/>
            <person name="Wu D."/>
            <person name="Peterson J."/>
            <person name="Van Aken S."/>
            <person name="Pai G."/>
            <person name="Militscher J."/>
            <person name="Sellers P."/>
            <person name="Gill J.E."/>
            <person name="Feldblyum T.V."/>
            <person name="Preuss D."/>
            <person name="Lin X."/>
            <person name="Nierman W.C."/>
            <person name="Salzberg S.L."/>
            <person name="White O."/>
            <person name="Venter J.C."/>
            <person name="Fraser C.M."/>
            <person name="Kaneko T."/>
            <person name="Nakamura Y."/>
            <person name="Sato S."/>
            <person name="Kato T."/>
            <person name="Asamizu E."/>
            <person name="Sasamoto S."/>
            <person name="Kimura T."/>
            <person name="Idesawa K."/>
            <person name="Kawashima K."/>
            <person name="Kishida Y."/>
            <person name="Kiyokawa C."/>
            <person name="Kohara M."/>
            <person name="Matsumoto M."/>
            <person name="Matsuno A."/>
            <person name="Muraki A."/>
            <person name="Nakayama S."/>
            <person name="Nakazaki N."/>
            <person name="Shinpo S."/>
            <person name="Takeuchi C."/>
            <person name="Wada T."/>
            <person name="Watanabe A."/>
            <person name="Yamada M."/>
            <person name="Yasuda M."/>
            <person name="Tabata S."/>
        </authorList>
    </citation>
    <scope>NUCLEOTIDE SEQUENCE [LARGE SCALE GENOMIC DNA]</scope>
    <source>
        <strain>cv. Columbia</strain>
    </source>
</reference>
<reference evidence="4" key="3">
    <citation type="journal article" date="2017" name="Plant J.">
        <title>Araport11: a complete reannotation of the Arabidopsis thaliana reference genome.</title>
        <authorList>
            <person name="Cheng C.Y."/>
            <person name="Krishnakumar V."/>
            <person name="Chan A.P."/>
            <person name="Thibaud-Nissen F."/>
            <person name="Schobel S."/>
            <person name="Town C.D."/>
        </authorList>
    </citation>
    <scope>GENOME REANNOTATION</scope>
    <source>
        <strain>cv. Columbia</strain>
    </source>
</reference>
<reference key="4">
    <citation type="journal article" date="2003" name="Science">
        <title>Empirical analysis of transcriptional activity in the Arabidopsis genome.</title>
        <authorList>
            <person name="Yamada K."/>
            <person name="Lim J."/>
            <person name="Dale J.M."/>
            <person name="Chen H."/>
            <person name="Shinn P."/>
            <person name="Palm C.J."/>
            <person name="Southwick A.M."/>
            <person name="Wu H.C."/>
            <person name="Kim C.J."/>
            <person name="Nguyen M."/>
            <person name="Pham P.K."/>
            <person name="Cheuk R.F."/>
            <person name="Karlin-Newmann G."/>
            <person name="Liu S.X."/>
            <person name="Lam B."/>
            <person name="Sakano H."/>
            <person name="Wu T."/>
            <person name="Yu G."/>
            <person name="Miranda M."/>
            <person name="Quach H.L."/>
            <person name="Tripp M."/>
            <person name="Chang C.H."/>
            <person name="Lee J.M."/>
            <person name="Toriumi M.J."/>
            <person name="Chan M.M."/>
            <person name="Tang C.C."/>
            <person name="Onodera C.S."/>
            <person name="Deng J.M."/>
            <person name="Akiyama K."/>
            <person name="Ansari Y."/>
            <person name="Arakawa T."/>
            <person name="Banh J."/>
            <person name="Banno F."/>
            <person name="Bowser L."/>
            <person name="Brooks S.Y."/>
            <person name="Carninci P."/>
            <person name="Chao Q."/>
            <person name="Choy N."/>
            <person name="Enju A."/>
            <person name="Goldsmith A.D."/>
            <person name="Gurjal M."/>
            <person name="Hansen N.F."/>
            <person name="Hayashizaki Y."/>
            <person name="Johnson-Hopson C."/>
            <person name="Hsuan V.W."/>
            <person name="Iida K."/>
            <person name="Karnes M."/>
            <person name="Khan S."/>
            <person name="Koesema E."/>
            <person name="Ishida J."/>
            <person name="Jiang P.X."/>
            <person name="Jones T."/>
            <person name="Kawai J."/>
            <person name="Kamiya A."/>
            <person name="Meyers C."/>
            <person name="Nakajima M."/>
            <person name="Narusaka M."/>
            <person name="Seki M."/>
            <person name="Sakurai T."/>
            <person name="Satou M."/>
            <person name="Tamse R."/>
            <person name="Vaysberg M."/>
            <person name="Wallender E.K."/>
            <person name="Wong C."/>
            <person name="Yamamura Y."/>
            <person name="Yuan S."/>
            <person name="Shinozaki K."/>
            <person name="Davis R.W."/>
            <person name="Theologis A."/>
            <person name="Ecker J.R."/>
        </authorList>
    </citation>
    <scope>NUCLEOTIDE SEQUENCE [LARGE SCALE MRNA]</scope>
    <source>
        <strain>cv. Columbia</strain>
    </source>
</reference>
<reference evidence="4" key="5">
    <citation type="submission" date="2002-03" db="EMBL/GenBank/DDBJ databases">
        <title>Full-length cDNA from Arabidopsis thaliana.</title>
        <authorList>
            <person name="Brover V.V."/>
            <person name="Troukhan M.E."/>
            <person name="Alexandrov N.A."/>
            <person name="Lu Y.-P."/>
            <person name="Flavell R.B."/>
            <person name="Feldmann K.A."/>
        </authorList>
    </citation>
    <scope>NUCLEOTIDE SEQUENCE [LARGE SCALE MRNA]</scope>
</reference>
<reference evidence="3" key="6">
    <citation type="journal article" date="2001" name="Plant Physiol.">
        <title>Proteomic approach to identify novel mitochondrial proteins in Arabidopsis.</title>
        <authorList>
            <person name="Kruft V."/>
            <person name="Eubel H."/>
            <person name="Jaensch L."/>
            <person name="Werhahn W."/>
            <person name="Braun H.-P."/>
        </authorList>
    </citation>
    <scope>PROTEIN SEQUENCE OF 2-16; 43-54 AND 81-90</scope>
    <scope>SUBCELLULAR LOCATION</scope>
    <source>
        <tissue>Leaf</tissue>
        <tissue>Stem</tissue>
    </source>
</reference>
<reference key="7">
    <citation type="journal article" date="2004" name="Plant Cell">
        <title>Experimental analysis of the Arabidopsis mitochondrial proteome highlights signaling and regulatory components, provides assessment of targeting prediction programs, and indicates plant-specific mitochondrial proteins.</title>
        <authorList>
            <person name="Heazlewood J.L."/>
            <person name="Tonti-Filippini J.S."/>
            <person name="Gout A.M."/>
            <person name="Day D.A."/>
            <person name="Whelan J."/>
            <person name="Millar A.H."/>
        </authorList>
    </citation>
    <scope>IDENTIFICATION BY MASS SPECTROMETRY</scope>
    <scope>SUBCELLULAR LOCATION [LARGE SCALE ANALYSIS]</scope>
    <source>
        <strain>cv. Landsberg erecta</strain>
    </source>
</reference>
<reference key="8">
    <citation type="journal article" date="2009" name="J. Proteomics">
        <title>Phosphoproteomic analysis of nuclei-enriched fractions from Arabidopsis thaliana.</title>
        <authorList>
            <person name="Jones A.M.E."/>
            <person name="MacLean D."/>
            <person name="Studholme D.J."/>
            <person name="Serna-Sanz A."/>
            <person name="Andreasson E."/>
            <person name="Rathjen J.P."/>
            <person name="Peck S.C."/>
        </authorList>
    </citation>
    <scope>IDENTIFICATION BY MASS SPECTROMETRY [LARGE SCALE ANALYSIS]</scope>
    <source>
        <strain>cv. Columbia</strain>
    </source>
</reference>
<protein>
    <recommendedName>
        <fullName>ATP synthase subunit d, mitochondrial</fullName>
        <shortName>ATPase subunit d</shortName>
    </recommendedName>
</protein>
<gene>
    <name type="ordered locus">At3g52300</name>
    <name type="ORF">T25B15.70</name>
</gene>
<dbReference type="EMBL" id="AJ271469">
    <property type="protein sequence ID" value="CAC81059.1"/>
    <property type="molecule type" value="mRNA"/>
</dbReference>
<dbReference type="EMBL" id="AL132972">
    <property type="protein sequence ID" value="CAC07921.1"/>
    <property type="molecule type" value="Genomic_DNA"/>
</dbReference>
<dbReference type="EMBL" id="CP002686">
    <property type="protein sequence ID" value="AEE78928.1"/>
    <property type="molecule type" value="Genomic_DNA"/>
</dbReference>
<dbReference type="EMBL" id="AY050330">
    <property type="protein sequence ID" value="AAK91347.1"/>
    <property type="molecule type" value="mRNA"/>
</dbReference>
<dbReference type="EMBL" id="AY094036">
    <property type="protein sequence ID" value="AAM16192.1"/>
    <property type="molecule type" value="mRNA"/>
</dbReference>
<dbReference type="EMBL" id="AY086788">
    <property type="protein sequence ID" value="AAM63838.1"/>
    <property type="molecule type" value="mRNA"/>
</dbReference>
<dbReference type="PIR" id="T46100">
    <property type="entry name" value="T46100"/>
</dbReference>
<dbReference type="RefSeq" id="NP_190798.1">
    <molecule id="Q9FT52-1"/>
    <property type="nucleotide sequence ID" value="NM_115090.4"/>
</dbReference>
<dbReference type="SMR" id="Q9FT52"/>
<dbReference type="BioGRID" id="9713">
    <property type="interactions" value="11"/>
</dbReference>
<dbReference type="FunCoup" id="Q9FT52">
    <property type="interactions" value="2902"/>
</dbReference>
<dbReference type="IntAct" id="Q9FT52">
    <property type="interactions" value="5"/>
</dbReference>
<dbReference type="MINT" id="Q9FT52"/>
<dbReference type="STRING" id="3702.Q9FT52"/>
<dbReference type="PaxDb" id="3702-AT3G52300.1"/>
<dbReference type="ProteomicsDB" id="246658">
    <molecule id="Q9FT52-1"/>
</dbReference>
<dbReference type="DNASU" id="824395"/>
<dbReference type="EnsemblPlants" id="AT3G52300.1">
    <molecule id="Q9FT52-1"/>
    <property type="protein sequence ID" value="AT3G52300.1"/>
    <property type="gene ID" value="AT3G52300"/>
</dbReference>
<dbReference type="Gramene" id="AT3G52300.1">
    <molecule id="Q9FT52-1"/>
    <property type="protein sequence ID" value="AT3G52300.1"/>
    <property type="gene ID" value="AT3G52300"/>
</dbReference>
<dbReference type="KEGG" id="ath:AT3G52300"/>
<dbReference type="Araport" id="AT3G52300"/>
<dbReference type="TAIR" id="AT3G52300">
    <property type="gene designation" value="ATPQ"/>
</dbReference>
<dbReference type="eggNOG" id="KOG3366">
    <property type="taxonomic scope" value="Eukaryota"/>
</dbReference>
<dbReference type="HOGENOM" id="CLU_089809_1_0_1"/>
<dbReference type="InParanoid" id="Q9FT52"/>
<dbReference type="OMA" id="TPQYKAK"/>
<dbReference type="OrthoDB" id="1057365at2759"/>
<dbReference type="PhylomeDB" id="Q9FT52"/>
<dbReference type="CD-CODE" id="4299E36E">
    <property type="entry name" value="Nucleolus"/>
</dbReference>
<dbReference type="PRO" id="PR:Q9FT52"/>
<dbReference type="Proteomes" id="UP000006548">
    <property type="component" value="Chromosome 3"/>
</dbReference>
<dbReference type="ExpressionAtlas" id="Q9FT52">
    <property type="expression patterns" value="baseline and differential"/>
</dbReference>
<dbReference type="GO" id="GO:0009507">
    <property type="term" value="C:chloroplast"/>
    <property type="evidence" value="ECO:0007005"/>
    <property type="project" value="TAIR"/>
</dbReference>
<dbReference type="GO" id="GO:0009535">
    <property type="term" value="C:chloroplast thylakoid membrane"/>
    <property type="evidence" value="ECO:0007005"/>
    <property type="project" value="TAIR"/>
</dbReference>
<dbReference type="GO" id="GO:0005829">
    <property type="term" value="C:cytosol"/>
    <property type="evidence" value="ECO:0007005"/>
    <property type="project" value="TAIR"/>
</dbReference>
<dbReference type="GO" id="GO:0022626">
    <property type="term" value="C:cytosolic ribosome"/>
    <property type="evidence" value="ECO:0007005"/>
    <property type="project" value="TAIR"/>
</dbReference>
<dbReference type="GO" id="GO:0005743">
    <property type="term" value="C:mitochondrial inner membrane"/>
    <property type="evidence" value="ECO:0007669"/>
    <property type="project" value="UniProtKB-SubCell"/>
</dbReference>
<dbReference type="GO" id="GO:0005739">
    <property type="term" value="C:mitochondrion"/>
    <property type="evidence" value="ECO:0000314"/>
    <property type="project" value="TAIR"/>
</dbReference>
<dbReference type="GO" id="GO:0005730">
    <property type="term" value="C:nucleolus"/>
    <property type="evidence" value="ECO:0007005"/>
    <property type="project" value="TAIR"/>
</dbReference>
<dbReference type="GO" id="GO:0000325">
    <property type="term" value="C:plant-type vacuole"/>
    <property type="evidence" value="ECO:0007005"/>
    <property type="project" value="TAIR"/>
</dbReference>
<dbReference type="GO" id="GO:0045259">
    <property type="term" value="C:proton-transporting ATP synthase complex"/>
    <property type="evidence" value="ECO:0007669"/>
    <property type="project" value="UniProtKB-KW"/>
</dbReference>
<dbReference type="GO" id="GO:0009579">
    <property type="term" value="C:thylakoid"/>
    <property type="evidence" value="ECO:0007005"/>
    <property type="project" value="TAIR"/>
</dbReference>
<dbReference type="GO" id="GO:0005507">
    <property type="term" value="F:copper ion binding"/>
    <property type="evidence" value="ECO:0007005"/>
    <property type="project" value="TAIR"/>
</dbReference>
<dbReference type="GO" id="GO:0016787">
    <property type="term" value="F:hydrolase activity"/>
    <property type="evidence" value="ECO:0007669"/>
    <property type="project" value="UniProtKB-KW"/>
</dbReference>
<dbReference type="GO" id="GO:0015078">
    <property type="term" value="F:proton transmembrane transporter activity"/>
    <property type="evidence" value="ECO:0007669"/>
    <property type="project" value="InterPro"/>
</dbReference>
<dbReference type="GO" id="GO:0003735">
    <property type="term" value="F:structural constituent of ribosome"/>
    <property type="evidence" value="ECO:0000314"/>
    <property type="project" value="CAFA"/>
</dbReference>
<dbReference type="GO" id="GO:0008270">
    <property type="term" value="F:zinc ion binding"/>
    <property type="evidence" value="ECO:0007005"/>
    <property type="project" value="TAIR"/>
</dbReference>
<dbReference type="GO" id="GO:0015986">
    <property type="term" value="P:proton motive force-driven ATP synthesis"/>
    <property type="evidence" value="ECO:0007669"/>
    <property type="project" value="InterPro"/>
</dbReference>
<dbReference type="Gene3D" id="6.10.280.70">
    <property type="match status" value="1"/>
</dbReference>
<dbReference type="InterPro" id="IPR008689">
    <property type="entry name" value="ATP_synth_F0_dsu_mt"/>
</dbReference>
<dbReference type="InterPro" id="IPR036228">
    <property type="entry name" value="ATP_synth_F0_dsu_sf_mt"/>
</dbReference>
<dbReference type="PANTHER" id="PTHR12700">
    <property type="entry name" value="ATP SYNTHASE SUBUNIT D, MITOCHONDRIAL"/>
    <property type="match status" value="1"/>
</dbReference>
<dbReference type="Pfam" id="PF05873">
    <property type="entry name" value="Mt_ATP-synt_D"/>
    <property type="match status" value="1"/>
</dbReference>
<dbReference type="PIRSF" id="PIRSF005514">
    <property type="entry name" value="ATPase_F0_D_mt"/>
    <property type="match status" value="1"/>
</dbReference>
<dbReference type="SUPFAM" id="SSF161065">
    <property type="entry name" value="ATP synthase D chain-like"/>
    <property type="match status" value="1"/>
</dbReference>
<keyword id="KW-0025">Alternative splicing</keyword>
<keyword id="KW-0138">CF(0)</keyword>
<keyword id="KW-0903">Direct protein sequencing</keyword>
<keyword id="KW-0375">Hydrogen ion transport</keyword>
<keyword id="KW-0378">Hydrolase</keyword>
<keyword id="KW-0406">Ion transport</keyword>
<keyword id="KW-0472">Membrane</keyword>
<keyword id="KW-0496">Mitochondrion</keyword>
<keyword id="KW-0999">Mitochondrion inner membrane</keyword>
<keyword id="KW-1185">Reference proteome</keyword>
<keyword id="KW-0813">Transport</keyword>
<name>ATP5H_ARATH</name>
<organism evidence="5">
    <name type="scientific">Arabidopsis thaliana</name>
    <name type="common">Mouse-ear cress</name>
    <dbReference type="NCBI Taxonomy" id="3702"/>
    <lineage>
        <taxon>Eukaryota</taxon>
        <taxon>Viridiplantae</taxon>
        <taxon>Streptophyta</taxon>
        <taxon>Embryophyta</taxon>
        <taxon>Tracheophyta</taxon>
        <taxon>Spermatophyta</taxon>
        <taxon>Magnoliopsida</taxon>
        <taxon>eudicotyledons</taxon>
        <taxon>Gunneridae</taxon>
        <taxon>Pentapetalae</taxon>
        <taxon>rosids</taxon>
        <taxon>malvids</taxon>
        <taxon>Brassicales</taxon>
        <taxon>Brassicaceae</taxon>
        <taxon>Camelineae</taxon>
        <taxon>Arabidopsis</taxon>
    </lineage>
</organism>
<evidence type="ECO:0000250" key="1"/>
<evidence type="ECO:0000269" key="2">
    <source>
    </source>
</evidence>
<evidence type="ECO:0000305" key="3"/>
<evidence type="ECO:0000312" key="4">
    <source>
        <dbReference type="EMBL" id="AAK91347.1"/>
    </source>
</evidence>
<evidence type="ECO:0000312" key="5">
    <source>
        <dbReference type="EMBL" id="CAC07921.1"/>
    </source>
</evidence>
<feature type="initiator methionine" description="Removed" evidence="2">
    <location>
        <position position="1"/>
    </location>
</feature>
<feature type="chain" id="PRO_0000071677" description="ATP synthase subunit d, mitochondrial">
    <location>
        <begin position="2"/>
        <end position="168"/>
    </location>
</feature>
<sequence length="168" mass="19586">MSGAGKKIADVAFKASRTIDWDGMAKVLVTDEARREFSNLRRAFDEVNTQLQTKFSQEPEPIDWDYYRKGIGAGIVDKYKEAYDSIEIPKYVDKVTPEYKPKFDALLVELKEAEQKSLKESERLEKEIADVQEISKKLSTMTADEYFEKHPELKKKFDDEIRNDNWGY</sequence>